<protein>
    <recommendedName>
        <fullName>ATP synthase subunit 9, mitochondrial</fullName>
    </recommendedName>
    <alternativeName>
        <fullName>Lipid-binding protein</fullName>
    </alternativeName>
</protein>
<name>ATP9_EMENI</name>
<dbReference type="EMBL" id="M30144">
    <property type="protein sequence ID" value="AAA33296.1"/>
    <property type="molecule type" value="Genomic_DNA"/>
</dbReference>
<dbReference type="EMBL" id="AACD01000026">
    <property type="protein sequence ID" value="EAA64744.1"/>
    <property type="molecule type" value="Genomic_DNA"/>
</dbReference>
<dbReference type="EMBL" id="BN001307">
    <property type="protein sequence ID" value="CBF85243.1"/>
    <property type="molecule type" value="Genomic_DNA"/>
</dbReference>
<dbReference type="PIR" id="S62677">
    <property type="entry name" value="S62677"/>
</dbReference>
<dbReference type="RefSeq" id="XP_659228.1">
    <property type="nucleotide sequence ID" value="XM_654136.1"/>
</dbReference>
<dbReference type="SMR" id="P16000"/>
<dbReference type="STRING" id="227321.P16000"/>
<dbReference type="EnsemblFungi" id="CBF85243">
    <property type="protein sequence ID" value="CBF85243"/>
    <property type="gene ID" value="ANIA_01624"/>
</dbReference>
<dbReference type="KEGG" id="ani:ANIA_01624"/>
<dbReference type="VEuPathDB" id="FungiDB:AN1624"/>
<dbReference type="eggNOG" id="KOG3025">
    <property type="taxonomic scope" value="Eukaryota"/>
</dbReference>
<dbReference type="HOGENOM" id="CLU_116822_0_0_1"/>
<dbReference type="InParanoid" id="P16000"/>
<dbReference type="OMA" id="MKRQTIQ"/>
<dbReference type="OrthoDB" id="438052at2759"/>
<dbReference type="Proteomes" id="UP000000560">
    <property type="component" value="Chromosome VII"/>
</dbReference>
<dbReference type="GO" id="GO:0031966">
    <property type="term" value="C:mitochondrial membrane"/>
    <property type="evidence" value="ECO:0007669"/>
    <property type="project" value="UniProtKB-SubCell"/>
</dbReference>
<dbReference type="GO" id="GO:0045259">
    <property type="term" value="C:proton-transporting ATP synthase complex"/>
    <property type="evidence" value="ECO:0007669"/>
    <property type="project" value="UniProtKB-KW"/>
</dbReference>
<dbReference type="GO" id="GO:0033177">
    <property type="term" value="C:proton-transporting two-sector ATPase complex, proton-transporting domain"/>
    <property type="evidence" value="ECO:0007669"/>
    <property type="project" value="InterPro"/>
</dbReference>
<dbReference type="GO" id="GO:0008289">
    <property type="term" value="F:lipid binding"/>
    <property type="evidence" value="ECO:0007669"/>
    <property type="project" value="UniProtKB-KW"/>
</dbReference>
<dbReference type="GO" id="GO:0015078">
    <property type="term" value="F:proton transmembrane transporter activity"/>
    <property type="evidence" value="ECO:0007669"/>
    <property type="project" value="InterPro"/>
</dbReference>
<dbReference type="GO" id="GO:0071472">
    <property type="term" value="P:cellular response to salt stress"/>
    <property type="evidence" value="ECO:0000270"/>
    <property type="project" value="AspGD"/>
</dbReference>
<dbReference type="GO" id="GO:0015986">
    <property type="term" value="P:proton motive force-driven ATP synthesis"/>
    <property type="evidence" value="ECO:0000318"/>
    <property type="project" value="GO_Central"/>
</dbReference>
<dbReference type="CDD" id="cd18182">
    <property type="entry name" value="ATP-synt_Fo_c_ATP5G3"/>
    <property type="match status" value="1"/>
</dbReference>
<dbReference type="FunFam" id="1.20.20.10:FF:000006">
    <property type="entry name" value="ATP synthase subunit 9, mitochondrial"/>
    <property type="match status" value="1"/>
</dbReference>
<dbReference type="Gene3D" id="1.20.20.10">
    <property type="entry name" value="F1F0 ATP synthase subunit C"/>
    <property type="match status" value="1"/>
</dbReference>
<dbReference type="HAMAP" id="MF_01396">
    <property type="entry name" value="ATP_synth_c_bact"/>
    <property type="match status" value="1"/>
</dbReference>
<dbReference type="InterPro" id="IPR000454">
    <property type="entry name" value="ATP_synth_F0_csu"/>
</dbReference>
<dbReference type="InterPro" id="IPR020537">
    <property type="entry name" value="ATP_synth_F0_csu_DDCD_BS"/>
</dbReference>
<dbReference type="InterPro" id="IPR038662">
    <property type="entry name" value="ATP_synth_F0_csu_sf"/>
</dbReference>
<dbReference type="InterPro" id="IPR002379">
    <property type="entry name" value="ATPase_proteolipid_c-like_dom"/>
</dbReference>
<dbReference type="InterPro" id="IPR035921">
    <property type="entry name" value="F/V-ATP_Csub_sf"/>
</dbReference>
<dbReference type="PANTHER" id="PTHR10031">
    <property type="entry name" value="ATP SYNTHASE LIPID-BINDING PROTEIN, MITOCHONDRIAL"/>
    <property type="match status" value="1"/>
</dbReference>
<dbReference type="PANTHER" id="PTHR10031:SF13">
    <property type="entry name" value="ATP SYNTHASE SUBUNIT 9, MITOCHONDRIAL"/>
    <property type="match status" value="1"/>
</dbReference>
<dbReference type="Pfam" id="PF00137">
    <property type="entry name" value="ATP-synt_C"/>
    <property type="match status" value="1"/>
</dbReference>
<dbReference type="PRINTS" id="PR00124">
    <property type="entry name" value="ATPASEC"/>
</dbReference>
<dbReference type="SUPFAM" id="SSF81333">
    <property type="entry name" value="F1F0 ATP synthase subunit C"/>
    <property type="match status" value="1"/>
</dbReference>
<dbReference type="PROSITE" id="PS00605">
    <property type="entry name" value="ATPASE_C"/>
    <property type="match status" value="1"/>
</dbReference>
<reference key="1">
    <citation type="journal article" date="1986" name="Mol. Gen. Genet.">
        <title>The ATP synthase subunit 9 gene of Aspergillus nidulans: sequence and transcription.</title>
        <authorList>
            <person name="Ward M."/>
            <person name="Turner G."/>
        </authorList>
    </citation>
    <scope>NUCLEOTIDE SEQUENCE [GENOMIC DNA]</scope>
</reference>
<reference key="2">
    <citation type="journal article" date="2005" name="Nature">
        <title>Sequencing of Aspergillus nidulans and comparative analysis with A. fumigatus and A. oryzae.</title>
        <authorList>
            <person name="Galagan J.E."/>
            <person name="Calvo S.E."/>
            <person name="Cuomo C."/>
            <person name="Ma L.-J."/>
            <person name="Wortman J.R."/>
            <person name="Batzoglou S."/>
            <person name="Lee S.-I."/>
            <person name="Bastuerkmen M."/>
            <person name="Spevak C.C."/>
            <person name="Clutterbuck J."/>
            <person name="Kapitonov V."/>
            <person name="Jurka J."/>
            <person name="Scazzocchio C."/>
            <person name="Farman M.L."/>
            <person name="Butler J."/>
            <person name="Purcell S."/>
            <person name="Harris S."/>
            <person name="Braus G.H."/>
            <person name="Draht O."/>
            <person name="Busch S."/>
            <person name="D'Enfert C."/>
            <person name="Bouchier C."/>
            <person name="Goldman G.H."/>
            <person name="Bell-Pedersen D."/>
            <person name="Griffiths-Jones S."/>
            <person name="Doonan J.H."/>
            <person name="Yu J."/>
            <person name="Vienken K."/>
            <person name="Pain A."/>
            <person name="Freitag M."/>
            <person name="Selker E.U."/>
            <person name="Archer D.B."/>
            <person name="Penalva M.A."/>
            <person name="Oakley B.R."/>
            <person name="Momany M."/>
            <person name="Tanaka T."/>
            <person name="Kumagai T."/>
            <person name="Asai K."/>
            <person name="Machida M."/>
            <person name="Nierman W.C."/>
            <person name="Denning D.W."/>
            <person name="Caddick M.X."/>
            <person name="Hynes M."/>
            <person name="Paoletti M."/>
            <person name="Fischer R."/>
            <person name="Miller B.L."/>
            <person name="Dyer P.S."/>
            <person name="Sachs M.S."/>
            <person name="Osmani S.A."/>
            <person name="Birren B.W."/>
        </authorList>
    </citation>
    <scope>NUCLEOTIDE SEQUENCE [LARGE SCALE GENOMIC DNA]</scope>
    <source>
        <strain>FGSC A4 / ATCC 38163 / CBS 112.46 / NRRL 194 / M139</strain>
    </source>
</reference>
<reference key="3">
    <citation type="journal article" date="2009" name="Fungal Genet. Biol.">
        <title>The 2008 update of the Aspergillus nidulans genome annotation: a community effort.</title>
        <authorList>
            <person name="Wortman J.R."/>
            <person name="Gilsenan J.M."/>
            <person name="Joardar V."/>
            <person name="Deegan J."/>
            <person name="Clutterbuck J."/>
            <person name="Andersen M.R."/>
            <person name="Archer D."/>
            <person name="Bencina M."/>
            <person name="Braus G."/>
            <person name="Coutinho P."/>
            <person name="von Dohren H."/>
            <person name="Doonan J."/>
            <person name="Driessen A.J."/>
            <person name="Durek P."/>
            <person name="Espeso E."/>
            <person name="Fekete E."/>
            <person name="Flipphi M."/>
            <person name="Estrada C.G."/>
            <person name="Geysens S."/>
            <person name="Goldman G."/>
            <person name="de Groot P.W."/>
            <person name="Hansen K."/>
            <person name="Harris S.D."/>
            <person name="Heinekamp T."/>
            <person name="Helmstaedt K."/>
            <person name="Henrissat B."/>
            <person name="Hofmann G."/>
            <person name="Homan T."/>
            <person name="Horio T."/>
            <person name="Horiuchi H."/>
            <person name="James S."/>
            <person name="Jones M."/>
            <person name="Karaffa L."/>
            <person name="Karanyi Z."/>
            <person name="Kato M."/>
            <person name="Keller N."/>
            <person name="Kelly D.E."/>
            <person name="Kiel J.A."/>
            <person name="Kim J.M."/>
            <person name="van der Klei I.J."/>
            <person name="Klis F.M."/>
            <person name="Kovalchuk A."/>
            <person name="Krasevec N."/>
            <person name="Kubicek C.P."/>
            <person name="Liu B."/>
            <person name="Maccabe A."/>
            <person name="Meyer V."/>
            <person name="Mirabito P."/>
            <person name="Miskei M."/>
            <person name="Mos M."/>
            <person name="Mullins J."/>
            <person name="Nelson D.R."/>
            <person name="Nielsen J."/>
            <person name="Oakley B.R."/>
            <person name="Osmani S.A."/>
            <person name="Pakula T."/>
            <person name="Paszewski A."/>
            <person name="Paulsen I."/>
            <person name="Pilsyk S."/>
            <person name="Pocsi I."/>
            <person name="Punt P.J."/>
            <person name="Ram A.F."/>
            <person name="Ren Q."/>
            <person name="Robellet X."/>
            <person name="Robson G."/>
            <person name="Seiboth B."/>
            <person name="van Solingen P."/>
            <person name="Specht T."/>
            <person name="Sun J."/>
            <person name="Taheri-Talesh N."/>
            <person name="Takeshita N."/>
            <person name="Ussery D."/>
            <person name="vanKuyk P.A."/>
            <person name="Visser H."/>
            <person name="van de Vondervoort P.J."/>
            <person name="de Vries R.P."/>
            <person name="Walton J."/>
            <person name="Xiang X."/>
            <person name="Xiong Y."/>
            <person name="Zeng A.P."/>
            <person name="Brandt B.W."/>
            <person name="Cornell M.J."/>
            <person name="van den Hondel C.A."/>
            <person name="Visser J."/>
            <person name="Oliver S.G."/>
            <person name="Turner G."/>
        </authorList>
    </citation>
    <scope>GENOME REANNOTATION</scope>
    <source>
        <strain>FGSC A4 / ATCC 38163 / CBS 112.46 / NRRL 194 / M139</strain>
    </source>
</reference>
<sequence length="143" mass="15264">MAASRVFAQRLASTMKVARPAARIQARTLTTQRMATPFQTIKRQQPSMIQASARQAFAARRQYSSEIADAMVQVSQNIGMGSAAIGLGGAGIGIGVVFGSLLLAVSRNPALRGQLFSYAILGFAFVEAIGLFDLMVAMMCKYV</sequence>
<organism>
    <name type="scientific">Emericella nidulans (strain FGSC A4 / ATCC 38163 / CBS 112.46 / NRRL 194 / M139)</name>
    <name type="common">Aspergillus nidulans</name>
    <dbReference type="NCBI Taxonomy" id="227321"/>
    <lineage>
        <taxon>Eukaryota</taxon>
        <taxon>Fungi</taxon>
        <taxon>Dikarya</taxon>
        <taxon>Ascomycota</taxon>
        <taxon>Pezizomycotina</taxon>
        <taxon>Eurotiomycetes</taxon>
        <taxon>Eurotiomycetidae</taxon>
        <taxon>Eurotiales</taxon>
        <taxon>Aspergillaceae</taxon>
        <taxon>Aspergillus</taxon>
        <taxon>Aspergillus subgen. Nidulantes</taxon>
    </lineage>
</organism>
<keyword id="KW-0138">CF(0)</keyword>
<keyword id="KW-0375">Hydrogen ion transport</keyword>
<keyword id="KW-0406">Ion transport</keyword>
<keyword id="KW-0446">Lipid-binding</keyword>
<keyword id="KW-0472">Membrane</keyword>
<keyword id="KW-0496">Mitochondrion</keyword>
<keyword id="KW-1185">Reference proteome</keyword>
<keyword id="KW-0809">Transit peptide</keyword>
<keyword id="KW-0812">Transmembrane</keyword>
<keyword id="KW-1133">Transmembrane helix</keyword>
<keyword id="KW-0813">Transport</keyword>
<comment type="function">
    <text>Mitochondrial membrane ATP synthase (F(1)F(0) ATP synthase or Complex V) produces ATP from ADP in the presence of a proton gradient across the membrane which is generated by electron transport complexes of the respiratory chain. F-type ATPases consist of two structural domains, F(1) - containing the extramembraneous catalytic core and F(0) - containing the membrane proton channel, linked together by a central stalk and a peripheral stalk. During catalysis, ATP synthesis in the catalytic domain of F(1) is coupled via a rotary mechanism of the central stalk subunits to proton translocation. Part of the complex F(0) domain. A homomeric c-ring of probably 10 subunits is part of the complex rotary element.</text>
</comment>
<comment type="subunit">
    <text>F-type ATPases have 2 components, CF(1) - the catalytic core - and CF(0) - the membrane proton channel. CF(1) has five subunits: alpha(3), beta(3), gamma(1), delta(1), epsilon(1). CF(0) has three main subunits: a, b and c.</text>
</comment>
<comment type="subcellular location">
    <subcellularLocation>
        <location evidence="3">Mitochondrion membrane</location>
        <topology evidence="3">Multi-pass membrane protein</topology>
    </subcellularLocation>
</comment>
<comment type="similarity">
    <text evidence="3">Belongs to the ATPase C chain family.</text>
</comment>
<accession>P16000</accession>
<accession>C8VNG9</accession>
<accession>Q5BCV6</accession>
<feature type="transit peptide" description="Mitochondrion">
    <location>
        <begin position="1"/>
        <end position="62"/>
    </location>
</feature>
<feature type="chain" id="PRO_0000002572" description="ATP synthase subunit 9, mitochondrial">
    <location>
        <begin position="63"/>
        <end position="143"/>
    </location>
</feature>
<feature type="transmembrane region" description="Helical" evidence="2">
    <location>
        <begin position="85"/>
        <end position="105"/>
    </location>
</feature>
<feature type="transmembrane region" description="Helical" evidence="2">
    <location>
        <begin position="119"/>
        <end position="139"/>
    </location>
</feature>
<feature type="site" description="Reversibly protonated during proton transport" evidence="1">
    <location>
        <position position="127"/>
    </location>
</feature>
<feature type="sequence conflict" description="In Ref. 1; AAA33296." evidence="3" ref="1">
    <original>I</original>
    <variation>T</variation>
    <location>
        <position position="94"/>
    </location>
</feature>
<evidence type="ECO:0000250" key="1"/>
<evidence type="ECO:0000255" key="2"/>
<evidence type="ECO:0000305" key="3"/>
<proteinExistence type="inferred from homology"/>
<gene>
    <name type="primary">atp9</name>
    <name type="synonym">oliC</name>
    <name type="ORF">AN1624</name>
</gene>